<gene>
    <name type="primary">KDM4A</name>
    <name type="synonym">JHDM3A</name>
    <name type="synonym">JMJD2</name>
    <name type="synonym">JMJD2A</name>
    <name type="synonym">KIAA0677</name>
</gene>
<comment type="function">
    <text evidence="8 11 14 16">Histone demethylase that specifically demethylates 'Lys-9' and 'Lys-36' residues of histone H3, thereby playing a central role in histone code (PubMed:26741168, PubMed:21768309). Does not demethylate histone H3 'Lys-4', H3 'Lys-27' nor H4 'Lys-20'. Demethylates trimethylated H3 'Lys-9' and H3 'Lys-36' residue, while it has no activity on mono- and dimethylated residues. Demethylation of Lys residue generates formaldehyde and succinate. Participates in transcriptional repression of ASCL2 and E2F-responsive promoters via the recruitment of histone deacetylases and NCOR1, respectively.</text>
</comment>
<comment type="function">
    <molecule>Isoform 2</molecule>
    <text evidence="13">Crucial for muscle differentiation, promotes transcriptional activation of the Myog gene by directing the removal of repressive chromatin marks at its promoter. Lacks the N-terminal demethylase domain.</text>
</comment>
<comment type="catalytic activity">
    <reaction evidence="11">
        <text>N(6),N(6),N(6)-trimethyl-L-lysyl(9)-[histone H3] + 2 2-oxoglutarate + 2 O2 = N(6)-methyl-L-lysyl(9)-[histone H3] + 2 formaldehyde + 2 succinate + 2 CO2</text>
        <dbReference type="Rhea" id="RHEA:60200"/>
        <dbReference type="Rhea" id="RHEA-COMP:15538"/>
        <dbReference type="Rhea" id="RHEA-COMP:15542"/>
        <dbReference type="ChEBI" id="CHEBI:15379"/>
        <dbReference type="ChEBI" id="CHEBI:16526"/>
        <dbReference type="ChEBI" id="CHEBI:16810"/>
        <dbReference type="ChEBI" id="CHEBI:16842"/>
        <dbReference type="ChEBI" id="CHEBI:30031"/>
        <dbReference type="ChEBI" id="CHEBI:61929"/>
        <dbReference type="ChEBI" id="CHEBI:61961"/>
        <dbReference type="EC" id="1.14.11.66"/>
    </reaction>
</comment>
<comment type="catalytic activity">
    <reaction evidence="11">
        <text>N(6),N(6),N(6)-trimethyl-L-lysyl(36)-[histone H3] + 2 2-oxoglutarate + 2 O2 = N(6)-methyl-L-lysyl(36)-[histone H3] + 2 formaldehyde + 2 succinate + 2 CO2</text>
        <dbReference type="Rhea" id="RHEA:60236"/>
        <dbReference type="Rhea" id="RHEA-COMP:9786"/>
        <dbReference type="Rhea" id="RHEA-COMP:15536"/>
        <dbReference type="ChEBI" id="CHEBI:15379"/>
        <dbReference type="ChEBI" id="CHEBI:16526"/>
        <dbReference type="ChEBI" id="CHEBI:16810"/>
        <dbReference type="ChEBI" id="CHEBI:16842"/>
        <dbReference type="ChEBI" id="CHEBI:30031"/>
        <dbReference type="ChEBI" id="CHEBI:61929"/>
        <dbReference type="ChEBI" id="CHEBI:61961"/>
        <dbReference type="EC" id="1.14.11.69"/>
    </reaction>
</comment>
<comment type="cofactor">
    <cofactor evidence="11">
        <name>Fe(2+)</name>
        <dbReference type="ChEBI" id="CHEBI:29033"/>
    </cofactor>
    <text evidence="11">Binds 1 Fe(2+) ion per subunit.</text>
</comment>
<comment type="activity regulation">
    <text evidence="16">Several specific inhibitors are being developed and tested.</text>
</comment>
<comment type="subunit">
    <text evidence="7 8 10 12 14 18">Interacts with histone deacetylase proteins HDAC1, HDAC2 and HDAC3. Interacts with RB and NCOR1. Interacts with VRK1 (PubMed:37179361). Interacts with FBXO22; this interaction promotes KDM4A ubiquitination (PubMed:21768309).</text>
</comment>
<comment type="subunit">
    <text evidence="7">(Microbial infection) Interacts with HTLV-1 Tax protein.</text>
</comment>
<comment type="interaction">
    <interactant intactId="EBI-936709">
        <id>O75164</id>
    </interactant>
    <interactant intactId="EBI-79704">
        <id>P11308</id>
        <label>ERG</label>
    </interactant>
    <organismsDiffer>false</organismsDiffer>
    <experiments>2</experiments>
</comment>
<comment type="interaction">
    <interactant intactId="EBI-936709">
        <id>O75164</id>
    </interactant>
    <interactant intactId="EBI-358900">
        <id>Q16695</id>
        <label>H3-4</label>
    </interactant>
    <organismsDiffer>false</organismsDiffer>
    <experiments>6</experiments>
</comment>
<comment type="interaction">
    <interactant intactId="EBI-936709">
        <id>O75164</id>
    </interactant>
    <interactant intactId="EBI-79722">
        <id>P68431</id>
        <label>H3C12</label>
    </interactant>
    <organismsDiffer>false</organismsDiffer>
    <experiments>7</experiments>
</comment>
<comment type="interaction">
    <interactant intactId="EBI-936709">
        <id>O75164</id>
    </interactant>
    <interactant intactId="EBI-302023">
        <id>P62805</id>
        <label>H4C9</label>
    </interactant>
    <organismsDiffer>false</organismsDiffer>
    <experiments>7</experiments>
</comment>
<comment type="subcellular location">
    <subcellularLocation>
        <location evidence="2 7 8">Nucleus</location>
    </subcellularLocation>
</comment>
<comment type="alternative products">
    <event type="alternative splicing"/>
    <isoform>
        <id>O75164-1</id>
        <name>1</name>
        <sequence type="displayed"/>
    </isoform>
    <isoform>
        <id>O75164-2</id>
        <name>2</name>
        <name>deltaN-JMJD2A</name>
        <sequence type="described" ref="VSP_044239"/>
    </isoform>
</comment>
<comment type="tissue specificity">
    <text evidence="7">Ubiquitous.</text>
</comment>
<comment type="domain">
    <text evidence="9 10 11 15">The 2 Tudor domains recognize and bind methylated histone H3 'Lys-4' residue (H3K4me). Double Tudor domain has an interdigitated structure and the unusual fold is required for its ability to bind methylated histone tails. Trimethylated H3 'Lys-4' (H3K4me3) is bound in a cage of 3 aromatic residues, 2 of which are from the Tudor domain 2, while the binding specificity is determined by side-chain interactions involving residues from the Tudor domain 1. The Tudor domains are also able to bind trimethylated histone H3 'Lys-9' (H3K9me3), di- and trimethylated H4 'Lys-20' (H4K20me2 and H4K20me3). Has high affinity for H4K20me2, blocking recruitment of proteins such as TP53BP1.</text>
</comment>
<comment type="PTM">
    <text evidence="17">(Microbial infection) SUMOylated by human herpesvirus 8 E3 SUMO-protein ligase K-bZIP/K8 at Lys-471; thereby modulating the chromatin binding and histone demethylase activity of KDM4A.</text>
</comment>
<comment type="PTM">
    <text evidence="14 15">Ubiquitinated by RNF8 and RNF168 following DNA damage, leading to its degradation. Degradation promotes accessibility of H4K20me2 mark for DNA repair protein TP53BP1, which is then recruited. Also ubiquitinated by the SCF(FBXO22) complex; leading to proteasomal degradation (PubMed:21768309).</text>
</comment>
<comment type="similarity">
    <text evidence="20">Belongs to the JHDM3 histone demethylase family.</text>
</comment>
<comment type="sequence caution" evidence="20">
    <conflict type="erroneous initiation">
        <sequence resource="EMBL-CDS" id="BAA31652"/>
    </conflict>
    <text>Extended N-terminus.</text>
</comment>
<dbReference type="EC" id="1.14.11.66" evidence="11"/>
<dbReference type="EC" id="1.14.11.69" evidence="11"/>
<dbReference type="EMBL" id="AB014577">
    <property type="protein sequence ID" value="BAA31652.2"/>
    <property type="status" value="ALT_INIT"/>
    <property type="molecule type" value="mRNA"/>
</dbReference>
<dbReference type="EMBL" id="AC092815">
    <property type="status" value="NOT_ANNOTATED_CDS"/>
    <property type="molecule type" value="Genomic_DNA"/>
</dbReference>
<dbReference type="EMBL" id="AL451062">
    <property type="status" value="NOT_ANNOTATED_CDS"/>
    <property type="molecule type" value="Genomic_DNA"/>
</dbReference>
<dbReference type="EMBL" id="BC002558">
    <property type="protein sequence ID" value="AAH02558.1"/>
    <property type="molecule type" value="mRNA"/>
</dbReference>
<dbReference type="CCDS" id="CCDS491.1">
    <molecule id="O75164-1"/>
</dbReference>
<dbReference type="RefSeq" id="NP_055478.2">
    <molecule id="O75164-1"/>
    <property type="nucleotide sequence ID" value="NM_014663.3"/>
</dbReference>
<dbReference type="RefSeq" id="XP_005271411.1">
    <property type="nucleotide sequence ID" value="XM_005271354.3"/>
</dbReference>
<dbReference type="RefSeq" id="XP_005271412.1">
    <property type="nucleotide sequence ID" value="XM_005271355.3"/>
</dbReference>
<dbReference type="PDB" id="2GF7">
    <property type="method" value="X-ray"/>
    <property type="resolution" value="2.20 A"/>
    <property type="chains" value="A/B/C/D=895-1011"/>
</dbReference>
<dbReference type="PDB" id="2GFA">
    <property type="method" value="X-ray"/>
    <property type="resolution" value="2.10 A"/>
    <property type="chains" value="A/B=895-1011"/>
</dbReference>
<dbReference type="PDB" id="2GP3">
    <property type="method" value="X-ray"/>
    <property type="resolution" value="2.35 A"/>
    <property type="chains" value="A/B=2-350"/>
</dbReference>
<dbReference type="PDB" id="2GP5">
    <property type="method" value="X-ray"/>
    <property type="resolution" value="2.28 A"/>
    <property type="chains" value="A/B=2-350"/>
</dbReference>
<dbReference type="PDB" id="2OQ6">
    <property type="method" value="X-ray"/>
    <property type="resolution" value="2.00 A"/>
    <property type="chains" value="A/B=1-359"/>
</dbReference>
<dbReference type="PDB" id="2OQ7">
    <property type="method" value="X-ray"/>
    <property type="resolution" value="2.15 A"/>
    <property type="chains" value="A/B=1-359"/>
</dbReference>
<dbReference type="PDB" id="2OS2">
    <property type="method" value="X-ray"/>
    <property type="resolution" value="2.30 A"/>
    <property type="chains" value="A/B=1-359"/>
</dbReference>
<dbReference type="PDB" id="2OT7">
    <property type="method" value="X-ray"/>
    <property type="resolution" value="2.13 A"/>
    <property type="chains" value="A/B=1-359"/>
</dbReference>
<dbReference type="PDB" id="2OX0">
    <property type="method" value="X-ray"/>
    <property type="resolution" value="1.95 A"/>
    <property type="chains" value="A/B=1-359"/>
</dbReference>
<dbReference type="PDB" id="2P5B">
    <property type="method" value="X-ray"/>
    <property type="resolution" value="1.99 A"/>
    <property type="chains" value="A/B=2-350"/>
</dbReference>
<dbReference type="PDB" id="2PXJ">
    <property type="method" value="X-ray"/>
    <property type="resolution" value="2.00 A"/>
    <property type="chains" value="A/B=2-348"/>
</dbReference>
<dbReference type="PDB" id="2Q8C">
    <property type="method" value="X-ray"/>
    <property type="resolution" value="2.05 A"/>
    <property type="chains" value="A/B=1-350"/>
</dbReference>
<dbReference type="PDB" id="2Q8D">
    <property type="method" value="X-ray"/>
    <property type="resolution" value="2.29 A"/>
    <property type="chains" value="A/B=1-350"/>
</dbReference>
<dbReference type="PDB" id="2Q8E">
    <property type="method" value="X-ray"/>
    <property type="resolution" value="2.05 A"/>
    <property type="chains" value="A/B=1-350"/>
</dbReference>
<dbReference type="PDB" id="2QQR">
    <property type="method" value="X-ray"/>
    <property type="resolution" value="1.80 A"/>
    <property type="chains" value="A/B=897-1011"/>
</dbReference>
<dbReference type="PDB" id="2QQS">
    <property type="method" value="X-ray"/>
    <property type="resolution" value="2.82 A"/>
    <property type="chains" value="A/B=897-1011"/>
</dbReference>
<dbReference type="PDB" id="2VD7">
    <property type="method" value="X-ray"/>
    <property type="resolution" value="2.25 A"/>
    <property type="chains" value="A/B=1-359"/>
</dbReference>
<dbReference type="PDB" id="2WWJ">
    <property type="method" value="X-ray"/>
    <property type="resolution" value="2.60 A"/>
    <property type="chains" value="A/B=7-353"/>
</dbReference>
<dbReference type="PDB" id="2YBK">
    <property type="method" value="X-ray"/>
    <property type="resolution" value="2.40 A"/>
    <property type="chains" value="A/B=1-359"/>
</dbReference>
<dbReference type="PDB" id="2YBP">
    <property type="method" value="X-ray"/>
    <property type="resolution" value="2.02 A"/>
    <property type="chains" value="A/B=1-359"/>
</dbReference>
<dbReference type="PDB" id="2YBS">
    <property type="method" value="X-ray"/>
    <property type="resolution" value="2.32 A"/>
    <property type="chains" value="A/B=1-359"/>
</dbReference>
<dbReference type="PDB" id="3NJY">
    <property type="method" value="X-ray"/>
    <property type="resolution" value="2.60 A"/>
    <property type="chains" value="A/B=1-359"/>
</dbReference>
<dbReference type="PDB" id="3PDQ">
    <property type="method" value="X-ray"/>
    <property type="resolution" value="1.99 A"/>
    <property type="chains" value="A/B=1-359"/>
</dbReference>
<dbReference type="PDB" id="3RVH">
    <property type="method" value="X-ray"/>
    <property type="resolution" value="2.25 A"/>
    <property type="chains" value="A/B=1-359"/>
</dbReference>
<dbReference type="PDB" id="3U4S">
    <property type="method" value="X-ray"/>
    <property type="resolution" value="2.15 A"/>
    <property type="chains" value="A/B=1-359"/>
</dbReference>
<dbReference type="PDB" id="4AI9">
    <property type="method" value="X-ray"/>
    <property type="resolution" value="2.25 A"/>
    <property type="chains" value="A/B=1-359"/>
</dbReference>
<dbReference type="PDB" id="4BIS">
    <property type="method" value="X-ray"/>
    <property type="resolution" value="2.49 A"/>
    <property type="chains" value="A/B=1-359"/>
</dbReference>
<dbReference type="PDB" id="4GD4">
    <property type="method" value="X-ray"/>
    <property type="resolution" value="2.33 A"/>
    <property type="chains" value="A/B=1-359"/>
</dbReference>
<dbReference type="PDB" id="4URA">
    <property type="method" value="X-ray"/>
    <property type="resolution" value="2.23 A"/>
    <property type="chains" value="A/B=1-359"/>
</dbReference>
<dbReference type="PDB" id="4V2V">
    <property type="method" value="X-ray"/>
    <property type="resolution" value="2.00 A"/>
    <property type="chains" value="A/B=1-359"/>
</dbReference>
<dbReference type="PDB" id="4V2W">
    <property type="method" value="X-ray"/>
    <property type="resolution" value="1.81 A"/>
    <property type="chains" value="A/B=1-359"/>
</dbReference>
<dbReference type="PDB" id="5A7N">
    <property type="method" value="X-ray"/>
    <property type="resolution" value="2.39 A"/>
    <property type="chains" value="A/B=1-359"/>
</dbReference>
<dbReference type="PDB" id="5A7O">
    <property type="method" value="X-ray"/>
    <property type="resolution" value="2.15 A"/>
    <property type="chains" value="A/B=1-359"/>
</dbReference>
<dbReference type="PDB" id="5A7P">
    <property type="method" value="X-ray"/>
    <property type="resolution" value="2.28 A"/>
    <property type="chains" value="A/B=1-359"/>
</dbReference>
<dbReference type="PDB" id="5A7Q">
    <property type="method" value="X-ray"/>
    <property type="resolution" value="2.00 A"/>
    <property type="chains" value="A/B=1-359"/>
</dbReference>
<dbReference type="PDB" id="5A7S">
    <property type="method" value="X-ray"/>
    <property type="resolution" value="2.20 A"/>
    <property type="chains" value="A/B=1-359"/>
</dbReference>
<dbReference type="PDB" id="5A7W">
    <property type="method" value="X-ray"/>
    <property type="resolution" value="2.27 A"/>
    <property type="chains" value="A/B=1-359"/>
</dbReference>
<dbReference type="PDB" id="5A80">
    <property type="method" value="X-ray"/>
    <property type="resolution" value="2.28 A"/>
    <property type="chains" value="A/B=1-359"/>
</dbReference>
<dbReference type="PDB" id="5ANQ">
    <property type="method" value="X-ray"/>
    <property type="resolution" value="2.00 A"/>
    <property type="chains" value="A/B=1-359"/>
</dbReference>
<dbReference type="PDB" id="5D6W">
    <property type="method" value="X-ray"/>
    <property type="resolution" value="1.99 A"/>
    <property type="chains" value="A/B/C/D=895-1011"/>
</dbReference>
<dbReference type="PDB" id="5D6X">
    <property type="method" value="X-ray"/>
    <property type="resolution" value="2.15 A"/>
    <property type="chains" value="A/B=895-1011"/>
</dbReference>
<dbReference type="PDB" id="5D6Y">
    <property type="method" value="X-ray"/>
    <property type="resolution" value="2.29 A"/>
    <property type="chains" value="A/B/C/D/E/F=895-1011"/>
</dbReference>
<dbReference type="PDB" id="5F2S">
    <property type="method" value="X-ray"/>
    <property type="resolution" value="2.08 A"/>
    <property type="chains" value="A/B/C/D=1-359"/>
</dbReference>
<dbReference type="PDB" id="5F2W">
    <property type="method" value="X-ray"/>
    <property type="resolution" value="2.60 A"/>
    <property type="chains" value="A/B/C/D=1-359"/>
</dbReference>
<dbReference type="PDB" id="5F32">
    <property type="method" value="X-ray"/>
    <property type="resolution" value="2.05 A"/>
    <property type="chains" value="A/B/C/D=1-359"/>
</dbReference>
<dbReference type="PDB" id="5F37">
    <property type="method" value="X-ray"/>
    <property type="resolution" value="2.22 A"/>
    <property type="chains" value="A/B/C/D=1-359"/>
</dbReference>
<dbReference type="PDB" id="5F39">
    <property type="method" value="X-ray"/>
    <property type="resolution" value="2.65 A"/>
    <property type="chains" value="A/B/C/D=1-359"/>
</dbReference>
<dbReference type="PDB" id="5F3C">
    <property type="method" value="X-ray"/>
    <property type="resolution" value="2.06 A"/>
    <property type="chains" value="A/B/C/D=1-359"/>
</dbReference>
<dbReference type="PDB" id="5F3E">
    <property type="method" value="X-ray"/>
    <property type="resolution" value="2.16 A"/>
    <property type="chains" value="A/B/C/D=1-359"/>
</dbReference>
<dbReference type="PDB" id="5F3G">
    <property type="method" value="X-ray"/>
    <property type="resolution" value="2.50 A"/>
    <property type="chains" value="A/B/C/D=1-359"/>
</dbReference>
<dbReference type="PDB" id="5F3I">
    <property type="method" value="X-ray"/>
    <property type="resolution" value="2.24 A"/>
    <property type="chains" value="A/B/C/D=1-359"/>
</dbReference>
<dbReference type="PDB" id="5F5I">
    <property type="method" value="X-ray"/>
    <property type="resolution" value="2.63 A"/>
    <property type="chains" value="A/B=1-359"/>
</dbReference>
<dbReference type="PDB" id="5FPV">
    <property type="method" value="X-ray"/>
    <property type="resolution" value="2.44 A"/>
    <property type="chains" value="A/B/C/D/E/F/G/H=1-359"/>
</dbReference>
<dbReference type="PDB" id="5FWE">
    <property type="method" value="X-ray"/>
    <property type="resolution" value="2.05 A"/>
    <property type="chains" value="A/B=1-359"/>
</dbReference>
<dbReference type="PDB" id="5FY8">
    <property type="method" value="X-ray"/>
    <property type="resolution" value="2.34 A"/>
    <property type="chains" value="A/B=1-359"/>
</dbReference>
<dbReference type="PDB" id="5FYC">
    <property type="method" value="X-ray"/>
    <property type="resolution" value="2.26 A"/>
    <property type="chains" value="A/B=1-359"/>
</dbReference>
<dbReference type="PDB" id="5FYH">
    <property type="method" value="X-ray"/>
    <property type="resolution" value="2.35 A"/>
    <property type="chains" value="A/B=1-359"/>
</dbReference>
<dbReference type="PDB" id="5FYI">
    <property type="method" value="X-ray"/>
    <property type="resolution" value="2.10 A"/>
    <property type="chains" value="A/B=1-359"/>
</dbReference>
<dbReference type="PDB" id="5LY1">
    <property type="method" value="X-ray"/>
    <property type="resolution" value="2.50 A"/>
    <property type="chains" value="A/B/C/D=1-359"/>
</dbReference>
<dbReference type="PDB" id="5LY2">
    <property type="method" value="X-ray"/>
    <property type="resolution" value="2.43 A"/>
    <property type="chains" value="A/B/C/D=1-359"/>
</dbReference>
<dbReference type="PDB" id="5TVR">
    <property type="method" value="X-ray"/>
    <property type="resolution" value="2.09 A"/>
    <property type="chains" value="A/B=1-359"/>
</dbReference>
<dbReference type="PDB" id="5TVS">
    <property type="method" value="X-ray"/>
    <property type="resolution" value="2.75 A"/>
    <property type="chains" value="A/B=1-359"/>
</dbReference>
<dbReference type="PDB" id="5VAR">
    <property type="method" value="X-ray"/>
    <property type="resolution" value="1.83 A"/>
    <property type="chains" value="A=897-1011"/>
</dbReference>
<dbReference type="PDB" id="5VGI">
    <property type="method" value="X-ray"/>
    <property type="resolution" value="2.07 A"/>
    <property type="chains" value="A/B/C/D=5-354"/>
</dbReference>
<dbReference type="PDB" id="5VMP">
    <property type="method" value="X-ray"/>
    <property type="resolution" value="2.48 A"/>
    <property type="chains" value="A/B/C/D=5-354"/>
</dbReference>
<dbReference type="PDB" id="6CG1">
    <property type="method" value="X-ray"/>
    <property type="resolution" value="2.16 A"/>
    <property type="chains" value="A/B/C/D=5-354"/>
</dbReference>
<dbReference type="PDB" id="6CG2">
    <property type="method" value="X-ray"/>
    <property type="resolution" value="2.34 A"/>
    <property type="chains" value="A/B/C/D=5-354"/>
</dbReference>
<dbReference type="PDB" id="6G5W">
    <property type="method" value="X-ray"/>
    <property type="resolution" value="1.83 A"/>
    <property type="chains" value="A/B=1-359"/>
</dbReference>
<dbReference type="PDB" id="6G5X">
    <property type="method" value="X-ray"/>
    <property type="resolution" value="1.78 A"/>
    <property type="chains" value="A/B=1-359"/>
</dbReference>
<dbReference type="PDB" id="6H4O">
    <property type="method" value="X-ray"/>
    <property type="resolution" value="2.25 A"/>
    <property type="chains" value="A/B/C/D=1-359"/>
</dbReference>
<dbReference type="PDB" id="6H4P">
    <property type="method" value="X-ray"/>
    <property type="resolution" value="2.19 A"/>
    <property type="chains" value="A/B/C/D=1-359"/>
</dbReference>
<dbReference type="PDB" id="6H4Q">
    <property type="method" value="X-ray"/>
    <property type="resolution" value="2.31 A"/>
    <property type="chains" value="A/B/C/D=1-359"/>
</dbReference>
<dbReference type="PDB" id="6H4R">
    <property type="method" value="X-ray"/>
    <property type="resolution" value="2.14 A"/>
    <property type="chains" value="A/B/C/D=1-359"/>
</dbReference>
<dbReference type="PDB" id="6H4S">
    <property type="method" value="X-ray"/>
    <property type="resolution" value="2.45 A"/>
    <property type="chains" value="A/B/C/D=1-359"/>
</dbReference>
<dbReference type="PDB" id="6H4T">
    <property type="method" value="X-ray"/>
    <property type="resolution" value="2.38 A"/>
    <property type="chains" value="A/B/C/D=1-359"/>
</dbReference>
<dbReference type="PDB" id="6H4U">
    <property type="method" value="X-ray"/>
    <property type="resolution" value="2.21 A"/>
    <property type="chains" value="A/B/C/D=1-359"/>
</dbReference>
<dbReference type="PDB" id="6H4V">
    <property type="method" value="X-ray"/>
    <property type="resolution" value="2.15 A"/>
    <property type="chains" value="A/B/C/D=1-359"/>
</dbReference>
<dbReference type="PDB" id="6H4W">
    <property type="method" value="X-ray"/>
    <property type="resolution" value="2.81 A"/>
    <property type="chains" value="A/B/C/D=1-359"/>
</dbReference>
<dbReference type="PDB" id="6H4X">
    <property type="method" value="X-ray"/>
    <property type="resolution" value="2.34 A"/>
    <property type="chains" value="A/B/C/D=1-359"/>
</dbReference>
<dbReference type="PDB" id="6H4Y">
    <property type="method" value="X-ray"/>
    <property type="resolution" value="2.38 A"/>
    <property type="chains" value="A/B/C/D=1-359"/>
</dbReference>
<dbReference type="PDB" id="6H8P">
    <property type="method" value="X-ray"/>
    <property type="resolution" value="1.98 A"/>
    <property type="chains" value="A/B=1-359"/>
</dbReference>
<dbReference type="PDB" id="6HGT">
    <property type="method" value="X-ray"/>
    <property type="resolution" value="2.33 A"/>
    <property type="chains" value="A/B/C/D=1-359"/>
</dbReference>
<dbReference type="PDB" id="7D4A">
    <property type="method" value="X-ray"/>
    <property type="resolution" value="2.20 A"/>
    <property type="chains" value="A=898-1011"/>
</dbReference>
<dbReference type="PDB" id="7EQV">
    <property type="method" value="X-ray"/>
    <property type="resolution" value="2.60 A"/>
    <property type="chains" value="A=8-355"/>
</dbReference>
<dbReference type="PDB" id="8WD3">
    <property type="method" value="X-ray"/>
    <property type="resolution" value="3.30 A"/>
    <property type="chains" value="A/B=1-359"/>
</dbReference>
<dbReference type="PDB" id="9GII">
    <property type="method" value="X-ray"/>
    <property type="resolution" value="1.70 A"/>
    <property type="chains" value="A=897-1011"/>
</dbReference>
<dbReference type="PDB" id="9GLE">
    <property type="method" value="X-ray"/>
    <property type="resolution" value="1.88 A"/>
    <property type="chains" value="A/B=1-359"/>
</dbReference>
<dbReference type="PDB" id="9GP1">
    <property type="method" value="X-ray"/>
    <property type="resolution" value="2.21 A"/>
    <property type="chains" value="A/B/C/D=1-359"/>
</dbReference>
<dbReference type="PDB" id="9GP4">
    <property type="method" value="X-ray"/>
    <property type="resolution" value="1.59 A"/>
    <property type="chains" value="A=897-1011"/>
</dbReference>
<dbReference type="PDBsum" id="2GF7"/>
<dbReference type="PDBsum" id="2GFA"/>
<dbReference type="PDBsum" id="2GP3"/>
<dbReference type="PDBsum" id="2GP5"/>
<dbReference type="PDBsum" id="2OQ6"/>
<dbReference type="PDBsum" id="2OQ7"/>
<dbReference type="PDBsum" id="2OS2"/>
<dbReference type="PDBsum" id="2OT7"/>
<dbReference type="PDBsum" id="2OX0"/>
<dbReference type="PDBsum" id="2P5B"/>
<dbReference type="PDBsum" id="2PXJ"/>
<dbReference type="PDBsum" id="2Q8C"/>
<dbReference type="PDBsum" id="2Q8D"/>
<dbReference type="PDBsum" id="2Q8E"/>
<dbReference type="PDBsum" id="2QQR"/>
<dbReference type="PDBsum" id="2QQS"/>
<dbReference type="PDBsum" id="2VD7"/>
<dbReference type="PDBsum" id="2WWJ"/>
<dbReference type="PDBsum" id="2YBK"/>
<dbReference type="PDBsum" id="2YBP"/>
<dbReference type="PDBsum" id="2YBS"/>
<dbReference type="PDBsum" id="3NJY"/>
<dbReference type="PDBsum" id="3PDQ"/>
<dbReference type="PDBsum" id="3RVH"/>
<dbReference type="PDBsum" id="3U4S"/>
<dbReference type="PDBsum" id="4AI9"/>
<dbReference type="PDBsum" id="4BIS"/>
<dbReference type="PDBsum" id="4GD4"/>
<dbReference type="PDBsum" id="4URA"/>
<dbReference type="PDBsum" id="4V2V"/>
<dbReference type="PDBsum" id="4V2W"/>
<dbReference type="PDBsum" id="5A7N"/>
<dbReference type="PDBsum" id="5A7O"/>
<dbReference type="PDBsum" id="5A7P"/>
<dbReference type="PDBsum" id="5A7Q"/>
<dbReference type="PDBsum" id="5A7S"/>
<dbReference type="PDBsum" id="5A7W"/>
<dbReference type="PDBsum" id="5A80"/>
<dbReference type="PDBsum" id="5ANQ"/>
<dbReference type="PDBsum" id="5D6W"/>
<dbReference type="PDBsum" id="5D6X"/>
<dbReference type="PDBsum" id="5D6Y"/>
<dbReference type="PDBsum" id="5F2S"/>
<dbReference type="PDBsum" id="5F2W"/>
<dbReference type="PDBsum" id="5F32"/>
<dbReference type="PDBsum" id="5F37"/>
<dbReference type="PDBsum" id="5F39"/>
<dbReference type="PDBsum" id="5F3C"/>
<dbReference type="PDBsum" id="5F3E"/>
<dbReference type="PDBsum" id="5F3G"/>
<dbReference type="PDBsum" id="5F3I"/>
<dbReference type="PDBsum" id="5F5I"/>
<dbReference type="PDBsum" id="5FPV"/>
<dbReference type="PDBsum" id="5FWE"/>
<dbReference type="PDBsum" id="5FY8"/>
<dbReference type="PDBsum" id="5FYC"/>
<dbReference type="PDBsum" id="5FYH"/>
<dbReference type="PDBsum" id="5FYI"/>
<dbReference type="PDBsum" id="5LY1"/>
<dbReference type="PDBsum" id="5LY2"/>
<dbReference type="PDBsum" id="5TVR"/>
<dbReference type="PDBsum" id="5TVS"/>
<dbReference type="PDBsum" id="5VAR"/>
<dbReference type="PDBsum" id="5VGI"/>
<dbReference type="PDBsum" id="5VMP"/>
<dbReference type="PDBsum" id="6CG1"/>
<dbReference type="PDBsum" id="6CG2"/>
<dbReference type="PDBsum" id="6G5W"/>
<dbReference type="PDBsum" id="6G5X"/>
<dbReference type="PDBsum" id="6H4O"/>
<dbReference type="PDBsum" id="6H4P"/>
<dbReference type="PDBsum" id="6H4Q"/>
<dbReference type="PDBsum" id="6H4R"/>
<dbReference type="PDBsum" id="6H4S"/>
<dbReference type="PDBsum" id="6H4T"/>
<dbReference type="PDBsum" id="6H4U"/>
<dbReference type="PDBsum" id="6H4V"/>
<dbReference type="PDBsum" id="6H4W"/>
<dbReference type="PDBsum" id="6H4X"/>
<dbReference type="PDBsum" id="6H4Y"/>
<dbReference type="PDBsum" id="6H8P"/>
<dbReference type="PDBsum" id="6HGT"/>
<dbReference type="PDBsum" id="7D4A"/>
<dbReference type="PDBsum" id="7EQV"/>
<dbReference type="PDBsum" id="8WD3"/>
<dbReference type="PDBsum" id="9GII"/>
<dbReference type="PDBsum" id="9GLE"/>
<dbReference type="PDBsum" id="9GP1"/>
<dbReference type="PDBsum" id="9GP4"/>
<dbReference type="PCDDB" id="O75164"/>
<dbReference type="SMR" id="O75164"/>
<dbReference type="BioGRID" id="115035">
    <property type="interactions" value="62"/>
</dbReference>
<dbReference type="CORUM" id="O75164"/>
<dbReference type="DIP" id="DIP-29372N"/>
<dbReference type="FunCoup" id="O75164">
    <property type="interactions" value="3616"/>
</dbReference>
<dbReference type="IntAct" id="O75164">
    <property type="interactions" value="61"/>
</dbReference>
<dbReference type="MINT" id="O75164"/>
<dbReference type="STRING" id="9606.ENSP00000361473"/>
<dbReference type="BindingDB" id="O75164"/>
<dbReference type="ChEMBL" id="CHEMBL5896"/>
<dbReference type="DrugBank" id="DB12610">
    <property type="generic name" value="Ebselen"/>
</dbReference>
<dbReference type="GuidetoPHARMACOLOGY" id="2675"/>
<dbReference type="GlyGen" id="O75164">
    <property type="glycosylation" value="1 site, 1 O-linked glycan (1 site)"/>
</dbReference>
<dbReference type="iPTMnet" id="O75164"/>
<dbReference type="PhosphoSitePlus" id="O75164"/>
<dbReference type="BioMuta" id="KDM4A"/>
<dbReference type="jPOST" id="O75164"/>
<dbReference type="MassIVE" id="O75164"/>
<dbReference type="PaxDb" id="9606-ENSP00000361473"/>
<dbReference type="PeptideAtlas" id="O75164"/>
<dbReference type="ProteomicsDB" id="49829">
    <molecule id="O75164-1"/>
</dbReference>
<dbReference type="Pumba" id="O75164"/>
<dbReference type="ABCD" id="O75164">
    <property type="antibodies" value="10 sequenced antibodies"/>
</dbReference>
<dbReference type="Antibodypedia" id="1997">
    <property type="antibodies" value="463 antibodies from 43 providers"/>
</dbReference>
<dbReference type="DNASU" id="9682"/>
<dbReference type="Ensembl" id="ENST00000372396.4">
    <molecule id="O75164-1"/>
    <property type="protein sequence ID" value="ENSP00000361473.3"/>
    <property type="gene ID" value="ENSG00000066135.13"/>
</dbReference>
<dbReference type="GeneID" id="9682"/>
<dbReference type="KEGG" id="hsa:9682"/>
<dbReference type="MANE-Select" id="ENST00000372396.4">
    <property type="protein sequence ID" value="ENSP00000361473.3"/>
    <property type="RefSeq nucleotide sequence ID" value="NM_014663.3"/>
    <property type="RefSeq protein sequence ID" value="NP_055478.2"/>
</dbReference>
<dbReference type="UCSC" id="uc001cjx.4">
    <molecule id="O75164-1"/>
    <property type="organism name" value="human"/>
</dbReference>
<dbReference type="AGR" id="HGNC:22978"/>
<dbReference type="CTD" id="9682"/>
<dbReference type="DisGeNET" id="9682"/>
<dbReference type="GeneCards" id="KDM4A"/>
<dbReference type="HGNC" id="HGNC:22978">
    <property type="gene designation" value="KDM4A"/>
</dbReference>
<dbReference type="HPA" id="ENSG00000066135">
    <property type="expression patterns" value="Low tissue specificity"/>
</dbReference>
<dbReference type="MIM" id="609764">
    <property type="type" value="gene"/>
</dbReference>
<dbReference type="neXtProt" id="NX_O75164"/>
<dbReference type="OpenTargets" id="ENSG00000066135"/>
<dbReference type="PharmGKB" id="PA164721403"/>
<dbReference type="VEuPathDB" id="HostDB:ENSG00000066135"/>
<dbReference type="eggNOG" id="KOG0958">
    <property type="taxonomic scope" value="Eukaryota"/>
</dbReference>
<dbReference type="GeneTree" id="ENSGT00940000159643"/>
<dbReference type="HOGENOM" id="CLU_001442_0_1_1"/>
<dbReference type="InParanoid" id="O75164"/>
<dbReference type="OMA" id="SGQYDMT"/>
<dbReference type="OrthoDB" id="9547406at2759"/>
<dbReference type="PAN-GO" id="O75164">
    <property type="GO annotations" value="4 GO annotations based on evolutionary models"/>
</dbReference>
<dbReference type="PhylomeDB" id="O75164"/>
<dbReference type="TreeFam" id="TF106449"/>
<dbReference type="BioCyc" id="MetaCyc:ENSG00000066135-MONOMER"/>
<dbReference type="BRENDA" id="1.14.11.27">
    <property type="organism ID" value="2681"/>
</dbReference>
<dbReference type="BRENDA" id="1.14.11.66">
    <property type="organism ID" value="2681"/>
</dbReference>
<dbReference type="BRENDA" id="1.14.11.67">
    <property type="organism ID" value="2681"/>
</dbReference>
<dbReference type="BRENDA" id="1.14.11.69">
    <property type="organism ID" value="2681"/>
</dbReference>
<dbReference type="BRENDA" id="1.14.99.66">
    <property type="organism ID" value="2681"/>
</dbReference>
<dbReference type="PathwayCommons" id="O75164"/>
<dbReference type="Reactome" id="R-HSA-3214842">
    <property type="pathway name" value="HDMs demethylate histones"/>
</dbReference>
<dbReference type="Reactome" id="R-HSA-5693565">
    <property type="pathway name" value="Recruitment and ATM-mediated phosphorylation of repair and signaling proteins at DNA double strand breaks"/>
</dbReference>
<dbReference type="Reactome" id="R-HSA-9029569">
    <property type="pathway name" value="NR1H3 &amp; NR1H2 regulate gene expression linked to cholesterol transport and efflux"/>
</dbReference>
<dbReference type="SignaLink" id="O75164"/>
<dbReference type="SIGNOR" id="O75164"/>
<dbReference type="BioGRID-ORCS" id="9682">
    <property type="hits" value="56 hits in 1184 CRISPR screens"/>
</dbReference>
<dbReference type="ChiTaRS" id="KDM4A">
    <property type="organism name" value="human"/>
</dbReference>
<dbReference type="EvolutionaryTrace" id="O75164"/>
<dbReference type="GeneWiki" id="JMJD2A"/>
<dbReference type="GenomeRNAi" id="9682"/>
<dbReference type="Pharos" id="O75164">
    <property type="development level" value="Tchem"/>
</dbReference>
<dbReference type="PRO" id="PR:O75164"/>
<dbReference type="Proteomes" id="UP000005640">
    <property type="component" value="Chromosome 1"/>
</dbReference>
<dbReference type="RNAct" id="O75164">
    <property type="molecule type" value="protein"/>
</dbReference>
<dbReference type="Bgee" id="ENSG00000066135">
    <property type="expression patterns" value="Expressed in cortical plate and 184 other cell types or tissues"/>
</dbReference>
<dbReference type="ExpressionAtlas" id="O75164">
    <property type="expression patterns" value="baseline and differential"/>
</dbReference>
<dbReference type="GO" id="GO:0000785">
    <property type="term" value="C:chromatin"/>
    <property type="evidence" value="ECO:0000318"/>
    <property type="project" value="GO_Central"/>
</dbReference>
<dbReference type="GO" id="GO:0005829">
    <property type="term" value="C:cytosol"/>
    <property type="evidence" value="ECO:0000314"/>
    <property type="project" value="HPA"/>
</dbReference>
<dbReference type="GO" id="GO:0001650">
    <property type="term" value="C:fibrillar center"/>
    <property type="evidence" value="ECO:0000314"/>
    <property type="project" value="HPA"/>
</dbReference>
<dbReference type="GO" id="GO:0005654">
    <property type="term" value="C:nucleoplasm"/>
    <property type="evidence" value="ECO:0000314"/>
    <property type="project" value="HPA"/>
</dbReference>
<dbReference type="GO" id="GO:0005634">
    <property type="term" value="C:nucleus"/>
    <property type="evidence" value="ECO:0000314"/>
    <property type="project" value="UniProtKB"/>
</dbReference>
<dbReference type="GO" id="GO:0005721">
    <property type="term" value="C:pericentric heterochromatin"/>
    <property type="evidence" value="ECO:0007669"/>
    <property type="project" value="Ensembl"/>
</dbReference>
<dbReference type="GO" id="GO:0032452">
    <property type="term" value="F:histone demethylase activity"/>
    <property type="evidence" value="ECO:0000304"/>
    <property type="project" value="Reactome"/>
</dbReference>
<dbReference type="GO" id="GO:0051864">
    <property type="term" value="F:histone H3K36 demethylase activity"/>
    <property type="evidence" value="ECO:0000314"/>
    <property type="project" value="UniProtKB"/>
</dbReference>
<dbReference type="GO" id="GO:0140681">
    <property type="term" value="F:histone H3K36me2/H3K36me3 demethylase activity"/>
    <property type="evidence" value="ECO:0007669"/>
    <property type="project" value="UniProtKB-EC"/>
</dbReference>
<dbReference type="GO" id="GO:0032454">
    <property type="term" value="F:histone H3K9 demethylase activity"/>
    <property type="evidence" value="ECO:0000318"/>
    <property type="project" value="GO_Central"/>
</dbReference>
<dbReference type="GO" id="GO:0140684">
    <property type="term" value="F:histone H3K9me2/H3K9me3 demethylase activity"/>
    <property type="evidence" value="ECO:0000315"/>
    <property type="project" value="UniProtKB"/>
</dbReference>
<dbReference type="GO" id="GO:0140005">
    <property type="term" value="F:histone H4K20me2 reader activity"/>
    <property type="evidence" value="ECO:0000314"/>
    <property type="project" value="UniProtKB"/>
</dbReference>
<dbReference type="GO" id="GO:0031625">
    <property type="term" value="F:ubiquitin protein ligase binding"/>
    <property type="evidence" value="ECO:0000353"/>
    <property type="project" value="UniProtKB"/>
</dbReference>
<dbReference type="GO" id="GO:0008270">
    <property type="term" value="F:zinc ion binding"/>
    <property type="evidence" value="ECO:0000314"/>
    <property type="project" value="UniProtKB"/>
</dbReference>
<dbReference type="GO" id="GO:0014898">
    <property type="term" value="P:cardiac muscle hypertrophy in response to stress"/>
    <property type="evidence" value="ECO:0007669"/>
    <property type="project" value="Ensembl"/>
</dbReference>
<dbReference type="GO" id="GO:0006338">
    <property type="term" value="P:chromatin remodeling"/>
    <property type="evidence" value="ECO:0000318"/>
    <property type="project" value="GO_Central"/>
</dbReference>
<dbReference type="GO" id="GO:0010507">
    <property type="term" value="P:negative regulation of autophagy"/>
    <property type="evidence" value="ECO:0000315"/>
    <property type="project" value="ParkinsonsUK-UCL"/>
</dbReference>
<dbReference type="GO" id="GO:0045892">
    <property type="term" value="P:negative regulation of DNA-templated transcription"/>
    <property type="evidence" value="ECO:0000314"/>
    <property type="project" value="UniProtKB"/>
</dbReference>
<dbReference type="GO" id="GO:0010629">
    <property type="term" value="P:negative regulation of gene expression"/>
    <property type="evidence" value="ECO:0000315"/>
    <property type="project" value="ParkinsonsUK-UCL"/>
</dbReference>
<dbReference type="GO" id="GO:0010468">
    <property type="term" value="P:regulation of gene expression"/>
    <property type="evidence" value="ECO:0000318"/>
    <property type="project" value="GO_Central"/>
</dbReference>
<dbReference type="CDD" id="cd15713">
    <property type="entry name" value="ePHD_JMJD2A"/>
    <property type="match status" value="1"/>
</dbReference>
<dbReference type="CDD" id="cd15575">
    <property type="entry name" value="PHD_JMJD2A"/>
    <property type="match status" value="1"/>
</dbReference>
<dbReference type="CDD" id="cd20463">
    <property type="entry name" value="Tudor_JMJD2A_rpt1"/>
    <property type="match status" value="1"/>
</dbReference>
<dbReference type="CDD" id="cd20466">
    <property type="entry name" value="Tudor_JMJD2A_rpt2"/>
    <property type="match status" value="1"/>
</dbReference>
<dbReference type="FunFam" id="2.60.120.650:FF:000048">
    <property type="entry name" value="Lysine-specific demethylase 4A"/>
    <property type="match status" value="1"/>
</dbReference>
<dbReference type="FunFam" id="3.30.40.10:FF:000236">
    <property type="entry name" value="Lysine-specific demethylase 4A"/>
    <property type="match status" value="1"/>
</dbReference>
<dbReference type="FunFam" id="3.30.40.10:FF:000029">
    <property type="entry name" value="lysine-specific demethylase 4C isoform X1"/>
    <property type="match status" value="1"/>
</dbReference>
<dbReference type="FunFam" id="3.10.330.70:FF:000001">
    <property type="entry name" value="Putative lysine-specific demethylase 4a"/>
    <property type="match status" value="1"/>
</dbReference>
<dbReference type="Gene3D" id="2.30.30.140">
    <property type="match status" value="1"/>
</dbReference>
<dbReference type="Gene3D" id="3.10.330.70">
    <property type="match status" value="1"/>
</dbReference>
<dbReference type="Gene3D" id="2.60.120.650">
    <property type="entry name" value="Cupin"/>
    <property type="match status" value="1"/>
</dbReference>
<dbReference type="Gene3D" id="3.30.40.10">
    <property type="entry name" value="Zinc/RING finger domain, C3HC4 (zinc finger)"/>
    <property type="match status" value="2"/>
</dbReference>
<dbReference type="IDEAL" id="IID00360"/>
<dbReference type="InterPro" id="IPR034732">
    <property type="entry name" value="EPHD"/>
</dbReference>
<dbReference type="InterPro" id="IPR003347">
    <property type="entry name" value="JmjC_dom"/>
</dbReference>
<dbReference type="InterPro" id="IPR047482">
    <property type="entry name" value="JMJD2A_ePHD"/>
</dbReference>
<dbReference type="InterPro" id="IPR003349">
    <property type="entry name" value="JmjN"/>
</dbReference>
<dbReference type="InterPro" id="IPR040477">
    <property type="entry name" value="KDM4-like_Tudor"/>
</dbReference>
<dbReference type="InterPro" id="IPR002999">
    <property type="entry name" value="Tudor"/>
</dbReference>
<dbReference type="InterPro" id="IPR047479">
    <property type="entry name" value="Tudor_KDM4A_rpt1"/>
</dbReference>
<dbReference type="InterPro" id="IPR047481">
    <property type="entry name" value="Tudor_KDM4A_rpt2"/>
</dbReference>
<dbReference type="InterPro" id="IPR011011">
    <property type="entry name" value="Znf_FYVE_PHD"/>
</dbReference>
<dbReference type="InterPro" id="IPR001965">
    <property type="entry name" value="Znf_PHD"/>
</dbReference>
<dbReference type="InterPro" id="IPR019787">
    <property type="entry name" value="Znf_PHD-finger"/>
</dbReference>
<dbReference type="InterPro" id="IPR013083">
    <property type="entry name" value="Znf_RING/FYVE/PHD"/>
</dbReference>
<dbReference type="PANTHER" id="PTHR10694">
    <property type="entry name" value="LYSINE-SPECIFIC DEMETHYLASE"/>
    <property type="match status" value="1"/>
</dbReference>
<dbReference type="PANTHER" id="PTHR10694:SF119">
    <property type="entry name" value="LYSINE-SPECIFIC DEMETHYLASE 4A"/>
    <property type="match status" value="1"/>
</dbReference>
<dbReference type="Pfam" id="PF02373">
    <property type="entry name" value="JmjC"/>
    <property type="match status" value="1"/>
</dbReference>
<dbReference type="Pfam" id="PF02375">
    <property type="entry name" value="JmjN"/>
    <property type="match status" value="1"/>
</dbReference>
<dbReference type="Pfam" id="PF13831">
    <property type="entry name" value="PHD_2"/>
    <property type="match status" value="1"/>
</dbReference>
<dbReference type="Pfam" id="PF18104">
    <property type="entry name" value="Tudor_2"/>
    <property type="match status" value="2"/>
</dbReference>
<dbReference type="Pfam" id="PF13832">
    <property type="entry name" value="zf-HC5HC2H_2"/>
    <property type="match status" value="1"/>
</dbReference>
<dbReference type="SMART" id="SM00558">
    <property type="entry name" value="JmjC"/>
    <property type="match status" value="1"/>
</dbReference>
<dbReference type="SMART" id="SM00545">
    <property type="entry name" value="JmjN"/>
    <property type="match status" value="1"/>
</dbReference>
<dbReference type="SMART" id="SM00249">
    <property type="entry name" value="PHD"/>
    <property type="match status" value="2"/>
</dbReference>
<dbReference type="SMART" id="SM00333">
    <property type="entry name" value="TUDOR"/>
    <property type="match status" value="2"/>
</dbReference>
<dbReference type="SUPFAM" id="SSF51197">
    <property type="entry name" value="Clavaminate synthase-like"/>
    <property type="match status" value="1"/>
</dbReference>
<dbReference type="SUPFAM" id="SSF57903">
    <property type="entry name" value="FYVE/PHD zinc finger"/>
    <property type="match status" value="1"/>
</dbReference>
<dbReference type="SUPFAM" id="SSF63748">
    <property type="entry name" value="Tudor/PWWP/MBT"/>
    <property type="match status" value="2"/>
</dbReference>
<dbReference type="PROSITE" id="PS51805">
    <property type="entry name" value="EPHD"/>
    <property type="match status" value="1"/>
</dbReference>
<dbReference type="PROSITE" id="PS51184">
    <property type="entry name" value="JMJC"/>
    <property type="match status" value="1"/>
</dbReference>
<dbReference type="PROSITE" id="PS51183">
    <property type="entry name" value="JMJN"/>
    <property type="match status" value="1"/>
</dbReference>
<reference key="1">
    <citation type="journal article" date="1998" name="DNA Res.">
        <title>Prediction of the coding sequences of unidentified human genes. X. The complete sequences of 100 new cDNA clones from brain which can code for large proteins in vitro.</title>
        <authorList>
            <person name="Ishikawa K."/>
            <person name="Nagase T."/>
            <person name="Suyama M."/>
            <person name="Miyajima N."/>
            <person name="Tanaka A."/>
            <person name="Kotani H."/>
            <person name="Nomura N."/>
            <person name="Ohara O."/>
        </authorList>
    </citation>
    <scope>NUCLEOTIDE SEQUENCE [LARGE SCALE MRNA] (ISOFORM 1)</scope>
    <scope>VARIANT GLU-482</scope>
    <source>
        <tissue>Brain</tissue>
    </source>
</reference>
<reference key="2">
    <citation type="journal article" date="2006" name="Nature">
        <title>The DNA sequence and biological annotation of human chromosome 1.</title>
        <authorList>
            <person name="Gregory S.G."/>
            <person name="Barlow K.F."/>
            <person name="McLay K.E."/>
            <person name="Kaul R."/>
            <person name="Swarbreck D."/>
            <person name="Dunham A."/>
            <person name="Scott C.E."/>
            <person name="Howe K.L."/>
            <person name="Woodfine K."/>
            <person name="Spencer C.C.A."/>
            <person name="Jones M.C."/>
            <person name="Gillson C."/>
            <person name="Searle S."/>
            <person name="Zhou Y."/>
            <person name="Kokocinski F."/>
            <person name="McDonald L."/>
            <person name="Evans R."/>
            <person name="Phillips K."/>
            <person name="Atkinson A."/>
            <person name="Cooper R."/>
            <person name="Jones C."/>
            <person name="Hall R.E."/>
            <person name="Andrews T.D."/>
            <person name="Lloyd C."/>
            <person name="Ainscough R."/>
            <person name="Almeida J.P."/>
            <person name="Ambrose K.D."/>
            <person name="Anderson F."/>
            <person name="Andrew R.W."/>
            <person name="Ashwell R.I.S."/>
            <person name="Aubin K."/>
            <person name="Babbage A.K."/>
            <person name="Bagguley C.L."/>
            <person name="Bailey J."/>
            <person name="Beasley H."/>
            <person name="Bethel G."/>
            <person name="Bird C.P."/>
            <person name="Bray-Allen S."/>
            <person name="Brown J.Y."/>
            <person name="Brown A.J."/>
            <person name="Buckley D."/>
            <person name="Burton J."/>
            <person name="Bye J."/>
            <person name="Carder C."/>
            <person name="Chapman J.C."/>
            <person name="Clark S.Y."/>
            <person name="Clarke G."/>
            <person name="Clee C."/>
            <person name="Cobley V."/>
            <person name="Collier R.E."/>
            <person name="Corby N."/>
            <person name="Coville G.J."/>
            <person name="Davies J."/>
            <person name="Deadman R."/>
            <person name="Dunn M."/>
            <person name="Earthrowl M."/>
            <person name="Ellington A.G."/>
            <person name="Errington H."/>
            <person name="Frankish A."/>
            <person name="Frankland J."/>
            <person name="French L."/>
            <person name="Garner P."/>
            <person name="Garnett J."/>
            <person name="Gay L."/>
            <person name="Ghori M.R.J."/>
            <person name="Gibson R."/>
            <person name="Gilby L.M."/>
            <person name="Gillett W."/>
            <person name="Glithero R.J."/>
            <person name="Grafham D.V."/>
            <person name="Griffiths C."/>
            <person name="Griffiths-Jones S."/>
            <person name="Grocock R."/>
            <person name="Hammond S."/>
            <person name="Harrison E.S.I."/>
            <person name="Hart E."/>
            <person name="Haugen E."/>
            <person name="Heath P.D."/>
            <person name="Holmes S."/>
            <person name="Holt K."/>
            <person name="Howden P.J."/>
            <person name="Hunt A.R."/>
            <person name="Hunt S.E."/>
            <person name="Hunter G."/>
            <person name="Isherwood J."/>
            <person name="James R."/>
            <person name="Johnson C."/>
            <person name="Johnson D."/>
            <person name="Joy A."/>
            <person name="Kay M."/>
            <person name="Kershaw J.K."/>
            <person name="Kibukawa M."/>
            <person name="Kimberley A.M."/>
            <person name="King A."/>
            <person name="Knights A.J."/>
            <person name="Lad H."/>
            <person name="Laird G."/>
            <person name="Lawlor S."/>
            <person name="Leongamornlert D.A."/>
            <person name="Lloyd D.M."/>
            <person name="Loveland J."/>
            <person name="Lovell J."/>
            <person name="Lush M.J."/>
            <person name="Lyne R."/>
            <person name="Martin S."/>
            <person name="Mashreghi-Mohammadi M."/>
            <person name="Matthews L."/>
            <person name="Matthews N.S.W."/>
            <person name="McLaren S."/>
            <person name="Milne S."/>
            <person name="Mistry S."/>
            <person name="Moore M.J.F."/>
            <person name="Nickerson T."/>
            <person name="O'Dell C.N."/>
            <person name="Oliver K."/>
            <person name="Palmeiri A."/>
            <person name="Palmer S.A."/>
            <person name="Parker A."/>
            <person name="Patel D."/>
            <person name="Pearce A.V."/>
            <person name="Peck A.I."/>
            <person name="Pelan S."/>
            <person name="Phelps K."/>
            <person name="Phillimore B.J."/>
            <person name="Plumb R."/>
            <person name="Rajan J."/>
            <person name="Raymond C."/>
            <person name="Rouse G."/>
            <person name="Saenphimmachak C."/>
            <person name="Sehra H.K."/>
            <person name="Sheridan E."/>
            <person name="Shownkeen R."/>
            <person name="Sims S."/>
            <person name="Skuce C.D."/>
            <person name="Smith M."/>
            <person name="Steward C."/>
            <person name="Subramanian S."/>
            <person name="Sycamore N."/>
            <person name="Tracey A."/>
            <person name="Tromans A."/>
            <person name="Van Helmond Z."/>
            <person name="Wall M."/>
            <person name="Wallis J.M."/>
            <person name="White S."/>
            <person name="Whitehead S.L."/>
            <person name="Wilkinson J.E."/>
            <person name="Willey D.L."/>
            <person name="Williams H."/>
            <person name="Wilming L."/>
            <person name="Wray P.W."/>
            <person name="Wu Z."/>
            <person name="Coulson A."/>
            <person name="Vaudin M."/>
            <person name="Sulston J.E."/>
            <person name="Durbin R.M."/>
            <person name="Hubbard T."/>
            <person name="Wooster R."/>
            <person name="Dunham I."/>
            <person name="Carter N.P."/>
            <person name="McVean G."/>
            <person name="Ross M.T."/>
            <person name="Harrow J."/>
            <person name="Olson M.V."/>
            <person name="Beck S."/>
            <person name="Rogers J."/>
            <person name="Bentley D.R."/>
        </authorList>
    </citation>
    <scope>NUCLEOTIDE SEQUENCE [LARGE SCALE GENOMIC DNA]</scope>
</reference>
<reference key="3">
    <citation type="journal article" date="2004" name="Genome Res.">
        <title>The status, quality, and expansion of the NIH full-length cDNA project: the Mammalian Gene Collection (MGC).</title>
        <authorList>
            <consortium name="The MGC Project Team"/>
        </authorList>
    </citation>
    <scope>NUCLEOTIDE SEQUENCE [LARGE SCALE MRNA] (ISOFORM 1)</scope>
    <scope>VARIANT GLU-482</scope>
    <source>
        <tissue>Placenta</tissue>
    </source>
</reference>
<reference key="4">
    <citation type="journal article" date="2005" name="J. Biol. Chem.">
        <title>Functional characterization of JMJD2A, a histone deacetylase- and retinoblastoma-binding protein.</title>
        <authorList>
            <person name="Gray S.G."/>
            <person name="Iglesias A.H."/>
            <person name="Lizcano F."/>
            <person name="Villanueva R."/>
            <person name="Camelo S."/>
            <person name="Jingu H."/>
            <person name="Teh B.T."/>
            <person name="Koibuchi N."/>
            <person name="Chin W.W."/>
            <person name="Kokkotou E."/>
            <person name="Dangond F."/>
        </authorList>
    </citation>
    <scope>SUBCELLULAR LOCATION</scope>
    <scope>TISSUE SPECIFICITY</scope>
    <scope>INTERACTION WITH HDAC1; HDAC2; HDAC3; RB1 AND HTLV-1 TAX</scope>
</reference>
<reference key="5">
    <citation type="journal article" date="2005" name="Mol. Cell. Biol.">
        <title>JMJD2A is a novel N-CoR-interacting protein and is involved in repression of the human transcription factor achaete scute-like homologue 2 (ASCL2/Hash2).</title>
        <authorList>
            <person name="Zhang D."/>
            <person name="Yoon H.-G."/>
            <person name="Wong J."/>
        </authorList>
    </citation>
    <scope>FUNCTION</scope>
    <scope>SUBCELLULAR LOCATION</scope>
    <scope>INTERACTION WITH NCOR1</scope>
</reference>
<reference key="6">
    <citation type="journal article" date="2006" name="Cell">
        <title>Reversal of histone lysine trimethylation by the JMJD2 family of histone demethylases.</title>
        <authorList>
            <person name="Whetstine J.R."/>
            <person name="Nottke A."/>
            <person name="Lan F."/>
            <person name="Huarte M."/>
            <person name="Smolikov S."/>
            <person name="Chen Z."/>
            <person name="Spooner E."/>
            <person name="Li E."/>
            <person name="Zhang G."/>
            <person name="Colaiacovo M."/>
            <person name="Shi Y."/>
        </authorList>
    </citation>
    <scope>FUNCTION</scope>
    <scope>CATALYTIC ACTIVITY</scope>
    <scope>COFACTOR</scope>
    <scope>DOMAIN</scope>
    <scope>MUTAGENESIS OF HIS-188</scope>
</reference>
<reference key="7">
    <citation type="journal article" date="2006" name="EMBO Rep.">
        <title>Tudor, MBT and chromo domains gauge the degree of lysine methylation.</title>
        <authorList>
            <person name="Kim J."/>
            <person name="Daniel J."/>
            <person name="Espejo A."/>
            <person name="Lake A."/>
            <person name="Krishna M."/>
            <person name="Xia L."/>
            <person name="Zhang Y."/>
            <person name="Bedford M.T."/>
        </authorList>
    </citation>
    <scope>DOMAIN</scope>
</reference>
<reference key="8">
    <citation type="journal article" date="2008" name="Proc. Natl. Acad. Sci. U.S.A.">
        <title>A quantitative atlas of mitotic phosphorylation.</title>
        <authorList>
            <person name="Dephoure N."/>
            <person name="Zhou C."/>
            <person name="Villen J."/>
            <person name="Beausoleil S.A."/>
            <person name="Bakalarski C.E."/>
            <person name="Elledge S.J."/>
            <person name="Gygi S.P."/>
        </authorList>
    </citation>
    <scope>IDENTIFICATION BY MASS SPECTROMETRY [LARGE SCALE ANALYSIS]</scope>
    <source>
        <tissue>Cervix carcinoma</tissue>
    </source>
</reference>
<reference key="9">
    <citation type="journal article" date="2009" name="Anal. Chem.">
        <title>Lys-N and trypsin cover complementary parts of the phosphoproteome in a refined SCX-based approach.</title>
        <authorList>
            <person name="Gauci S."/>
            <person name="Helbig A.O."/>
            <person name="Slijper M."/>
            <person name="Krijgsveld J."/>
            <person name="Heck A.J."/>
            <person name="Mohammed S."/>
        </authorList>
    </citation>
    <scope>ACETYLATION [LARGE SCALE ANALYSIS] AT ALA-2</scope>
    <scope>CLEAVAGE OF INITIATOR METHIONINE [LARGE SCALE ANALYSIS]</scope>
    <scope>IDENTIFICATION BY MASS SPECTROMETRY [LARGE SCALE ANALYSIS]</scope>
</reference>
<reference key="10">
    <citation type="journal article" date="2011" name="Sci. Signal.">
        <title>System-wide temporal characterization of the proteome and phosphoproteome of human embryonic stem cell differentiation.</title>
        <authorList>
            <person name="Rigbolt K.T."/>
            <person name="Prokhorova T.A."/>
            <person name="Akimov V."/>
            <person name="Henningsen J."/>
            <person name="Johansen P.T."/>
            <person name="Kratchmarova I."/>
            <person name="Kassem M."/>
            <person name="Mann M."/>
            <person name="Olsen J.V."/>
            <person name="Blagoev B."/>
        </authorList>
    </citation>
    <scope>IDENTIFICATION BY MASS SPECTROMETRY [LARGE SCALE ANALYSIS]</scope>
</reference>
<reference key="11">
    <citation type="journal article" date="2011" name="Mol. Cell. Biol.">
        <title>SCF(FBXO22) regulates histone H3 lysine 9 and 36 methylation levels by targeting histone demethylase KDM4A for ubiquitin-mediated proteasomal degradation.</title>
        <authorList>
            <person name="Tan M.K."/>
            <person name="Lim H.J."/>
            <person name="Harper J.W."/>
        </authorList>
    </citation>
    <scope>FUNCTION</scope>
    <scope>INTERACTION WITH FBXO22</scope>
    <scope>UBIQUITINATION</scope>
</reference>
<reference key="12">
    <citation type="journal article" date="2012" name="EMBO J.">
        <title>RNF8- and RNF168-dependent degradation of KDM4A/JMJD2A triggers 53BP1 recruitment to DNA damage sites.</title>
        <authorList>
            <person name="Mallette F.A."/>
            <person name="Mattiroli F."/>
            <person name="Cui G."/>
            <person name="Young L.C."/>
            <person name="Hendzel M.J."/>
            <person name="Mer G."/>
            <person name="Sixma T.K."/>
            <person name="Richard S."/>
        </authorList>
    </citation>
    <scope>UBIQUITINATION</scope>
    <scope>DOMAIN</scope>
    <scope>MUTAGENESIS OF HIS-188 AND ASP-939</scope>
</reference>
<reference key="13">
    <citation type="journal article" date="2011" name="PLoS Genet.">
        <title>A new isoform of the histone demethylase JMJD2A/KDM4A is required for skeletal muscle differentiation.</title>
        <authorList>
            <person name="Verrier L."/>
            <person name="Escaffit F."/>
            <person name="Chailleux C."/>
            <person name="Trouche D."/>
            <person name="Vandromme M."/>
        </authorList>
    </citation>
    <scope>ALTERNATIVE SPLICING (ISOFORM 2)</scope>
    <scope>FUNCTION (ISOFORM 2)</scope>
</reference>
<reference key="14">
    <citation type="journal article" date="2017" name="PLoS Pathog.">
        <title>SUMO modification of a heterochromatin histone demethylase JMJD2A enables viral gene transactivation and viral replication.</title>
        <authorList>
            <person name="Yang W.S."/>
            <person name="Campbell M."/>
            <person name="Chang P.C."/>
        </authorList>
    </citation>
    <scope>SUMOYLATION BY HUMAN HERPESVIRUS 8 PROTEIN E3 SUMO-PROTEIN LIGASE K-BZIP/K8 (MICROBIAL INFECTION)</scope>
    <scope>MUTAGENESIS OF LYS-471</scope>
</reference>
<reference key="15">
    <citation type="journal article" date="2013" name="J. Proteome Res.">
        <title>Toward a comprehensive characterization of a human cancer cell phosphoproteome.</title>
        <authorList>
            <person name="Zhou H."/>
            <person name="Di Palma S."/>
            <person name="Preisinger C."/>
            <person name="Peng M."/>
            <person name="Polat A.N."/>
            <person name="Heck A.J."/>
            <person name="Mohammed S."/>
        </authorList>
    </citation>
    <scope>PHOSPHORYLATION [LARGE SCALE ANALYSIS] AT SER-523</scope>
    <scope>IDENTIFICATION BY MASS SPECTROMETRY [LARGE SCALE ANALYSIS]</scope>
    <source>
        <tissue>Erythroleukemia</tissue>
    </source>
</reference>
<reference key="16">
    <citation type="journal article" date="2023" name="Epigenetics Chromatin">
        <title>The pattern of histone H3 epigenetic posttranslational modifications is regulated by the VRK1 chromatin kinase.</title>
        <authorList>
            <person name="Monte-Serrano E."/>
            <person name="Morejon-Garcia P."/>
            <person name="Campillo-Marcos I."/>
            <person name="Campos-Diaz A."/>
            <person name="Navarro-Carrasco E."/>
            <person name="Lazo P.A."/>
        </authorList>
    </citation>
    <scope>INTERACTION WITH VRK1</scope>
</reference>
<reference key="17">
    <citation type="journal article" date="2006" name="Cell">
        <title>Structural insights into histone demethylation by JMJD2 family members.</title>
        <authorList>
            <person name="Chen Z."/>
            <person name="Zang J."/>
            <person name="Whetstine J."/>
            <person name="Hong X."/>
            <person name="Davrazou F."/>
            <person name="Kutateladze T.G."/>
            <person name="Simpson M."/>
            <person name="Mao Q."/>
            <person name="Pan C.-H."/>
            <person name="Dai S."/>
            <person name="Hagman J."/>
            <person name="Hansen K."/>
            <person name="Shi Y."/>
            <person name="Zhang G."/>
        </authorList>
    </citation>
    <scope>X-RAY CRYSTALLOGRAPHY (2.28 ANGSTROMS) OF 1-350 IN COMPLEX WITH IRON AND 2-OXOGLUTARATE</scope>
    <scope>ZINC-BINDING</scope>
    <scope>MUTAGENESIS OF GLY-133; GLY-138; GLY-165; GLY-170; 279-SER-THR-280 AND TYR-973</scope>
</reference>
<reference key="18">
    <citation type="journal article" date="2006" name="Science">
        <title>Recognition of histone H3 lysine-4 methylation by the double Tudor domain of JMJD2A.</title>
        <authorList>
            <person name="Huang Y."/>
            <person name="Fang J."/>
            <person name="Bedford M.T."/>
            <person name="Zhang Y."/>
            <person name="Xu R.-M."/>
        </authorList>
    </citation>
    <scope>X-RAY CRYSTALLOGRAPHY (2.1 ANGSTROMS) OF 895-1011 IN COMPLEX WITH TRIMETHYLATED H3 'LYS-4'</scope>
    <scope>DOMAIN</scope>
    <scope>MUTAGENESIS OF ASP-945; TRP-967 AND TYR-973</scope>
</reference>
<reference key="19">
    <citation type="journal article" date="2016" name="J. Med. Chem.">
        <title>8-Substituted Pyrido[3,4-d]pyrimidin-4(3H)-one Derivatives As Potent, Cell Permeable, KDM4 (JMJD2) and KDM5 (JARID1) Histone Lysine Demethylase Inhibitors.</title>
        <authorList>
            <person name="Bavetsias V."/>
            <person name="Lanigan R.M."/>
            <person name="Ruda G.F."/>
            <person name="Atrash B."/>
            <person name="McLaughlin M.G."/>
            <person name="Tumber A."/>
            <person name="Mok N.Y."/>
            <person name="Le Bihan Y.V."/>
            <person name="Dempster S."/>
            <person name="Boxall K.J."/>
            <person name="Jeganathan F."/>
            <person name="Hatch S.B."/>
            <person name="Savitsky P."/>
            <person name="Velupillai S."/>
            <person name="Krojer T."/>
            <person name="England K.S."/>
            <person name="Sejberg J."/>
            <person name="Thai C."/>
            <person name="Donovan A."/>
            <person name="Pal A."/>
            <person name="Scozzafava G."/>
            <person name="Bennett J.M."/>
            <person name="Kawamura A."/>
            <person name="Johansson C."/>
            <person name="Szykowska A."/>
            <person name="Gileadi C."/>
            <person name="Burgess-Brown N.A."/>
            <person name="von Delft F."/>
            <person name="Oppermann U."/>
            <person name="Walters Z."/>
            <person name="Shipley J."/>
            <person name="Raynaud F.I."/>
            <person name="Westaway S.M."/>
            <person name="Prinjha R.K."/>
            <person name="Fedorov O."/>
            <person name="Burke R."/>
            <person name="Schofield C.J."/>
            <person name="Westwood I.M."/>
            <person name="Bountra C."/>
            <person name="Muller S."/>
            <person name="van Montfort R.L."/>
            <person name="Brennan P.E."/>
            <person name="Blagg J."/>
        </authorList>
    </citation>
    <scope>X-RAY CRYSTALLOGRAPHY (2.05 ANGSTROMS) OF 4-355 IN COMPLEX WITH ZINC AND SEVERAL INHIBITORS</scope>
    <scope>FUNCTION</scope>
    <scope>ACTIVITY REGULATION</scope>
    <scope>COFACTOR</scope>
</reference>
<reference key="20">
    <citation type="journal article" date="2016" name="Nat. Chem. Biol.">
        <title>Structural analysis of human KDM5B guides histone demethylase inhibitor development.</title>
        <authorList>
            <person name="Johansson C."/>
            <person name="Velupillai S."/>
            <person name="Tumber A."/>
            <person name="Szykowska A."/>
            <person name="Hookway E.S."/>
            <person name="Nowak R.P."/>
            <person name="Strain-Damerell C."/>
            <person name="Gileadi C."/>
            <person name="Philpott M."/>
            <person name="Burgess-Brown N."/>
            <person name="Wu N."/>
            <person name="Kopec J."/>
            <person name="Nuzzi A."/>
            <person name="Steuber H."/>
            <person name="Egner U."/>
            <person name="Badock V."/>
            <person name="Munro S."/>
            <person name="LaThangue N.B."/>
            <person name="Westaway S."/>
            <person name="Brown J."/>
            <person name="Athanasou N."/>
            <person name="Prinjha R."/>
            <person name="Brennan P.E."/>
            <person name="Oppermann U."/>
        </authorList>
    </citation>
    <scope>X-RAY CRYSTALLOGRAPHY (2.44 ANGSTROMS) OF 11-161 AND 170-354</scope>
</reference>
<accession>O75164</accession>
<accession>Q5VVB1</accession>
<organism>
    <name type="scientific">Homo sapiens</name>
    <name type="common">Human</name>
    <dbReference type="NCBI Taxonomy" id="9606"/>
    <lineage>
        <taxon>Eukaryota</taxon>
        <taxon>Metazoa</taxon>
        <taxon>Chordata</taxon>
        <taxon>Craniata</taxon>
        <taxon>Vertebrata</taxon>
        <taxon>Euteleostomi</taxon>
        <taxon>Mammalia</taxon>
        <taxon>Eutheria</taxon>
        <taxon>Euarchontoglires</taxon>
        <taxon>Primates</taxon>
        <taxon>Haplorrhini</taxon>
        <taxon>Catarrhini</taxon>
        <taxon>Hominidae</taxon>
        <taxon>Homo</taxon>
    </lineage>
</organism>
<keyword id="KW-0002">3D-structure</keyword>
<keyword id="KW-0007">Acetylation</keyword>
<keyword id="KW-0025">Alternative splicing</keyword>
<keyword id="KW-0156">Chromatin regulator</keyword>
<keyword id="KW-0223">Dioxygenase</keyword>
<keyword id="KW-0945">Host-virus interaction</keyword>
<keyword id="KW-0408">Iron</keyword>
<keyword id="KW-1017">Isopeptide bond</keyword>
<keyword id="KW-0479">Metal-binding</keyword>
<keyword id="KW-0539">Nucleus</keyword>
<keyword id="KW-0560">Oxidoreductase</keyword>
<keyword id="KW-0597">Phosphoprotein</keyword>
<keyword id="KW-1267">Proteomics identification</keyword>
<keyword id="KW-1185">Reference proteome</keyword>
<keyword id="KW-0677">Repeat</keyword>
<keyword id="KW-0804">Transcription</keyword>
<keyword id="KW-0805">Transcription regulation</keyword>
<keyword id="KW-0832">Ubl conjugation</keyword>
<keyword id="KW-0862">Zinc</keyword>
<keyword id="KW-0863">Zinc-finger</keyword>
<feature type="initiator methionine" description="Removed" evidence="29">
    <location>
        <position position="1"/>
    </location>
</feature>
<feature type="chain" id="PRO_0000183172" description="Lysine-specific demethylase 4A">
    <location>
        <begin position="2"/>
        <end position="1064"/>
    </location>
</feature>
<feature type="domain" description="JmjN" evidence="2">
    <location>
        <begin position="14"/>
        <end position="56"/>
    </location>
</feature>
<feature type="domain" description="JmjC" evidence="3">
    <location>
        <begin position="142"/>
        <end position="308"/>
    </location>
</feature>
<feature type="domain" description="Tudor 1">
    <location>
        <begin position="897"/>
        <end position="954"/>
    </location>
</feature>
<feature type="domain" description="Tudor 2">
    <location>
        <begin position="955"/>
        <end position="1011"/>
    </location>
</feature>
<feature type="zinc finger region" description="PHD-type 1">
    <location>
        <begin position="709"/>
        <end position="767"/>
    </location>
</feature>
<feature type="zinc finger region" description="C2HC pre-PHD-type" evidence="4">
    <location>
        <begin position="772"/>
        <end position="805"/>
    </location>
</feature>
<feature type="zinc finger region" description="PHD-type 2" evidence="4">
    <location>
        <begin position="828"/>
        <end position="885"/>
    </location>
</feature>
<feature type="region of interest" description="Disordered" evidence="5">
    <location>
        <begin position="358"/>
        <end position="384"/>
    </location>
</feature>
<feature type="region of interest" description="Disordered" evidence="5">
    <location>
        <begin position="501"/>
        <end position="537"/>
    </location>
</feature>
<feature type="region of interest" description="Interaction with NCOR1" evidence="8">
    <location>
        <begin position="597"/>
        <end position="638"/>
    </location>
</feature>
<feature type="region of interest" description="Disordered" evidence="5">
    <location>
        <begin position="616"/>
        <end position="641"/>
    </location>
</feature>
<feature type="compositionally biased region" description="Acidic residues" evidence="5">
    <location>
        <begin position="366"/>
        <end position="382"/>
    </location>
</feature>
<feature type="compositionally biased region" description="Low complexity" evidence="5">
    <location>
        <begin position="509"/>
        <end position="532"/>
    </location>
</feature>
<feature type="compositionally biased region" description="Acidic residues" evidence="5">
    <location>
        <begin position="616"/>
        <end position="634"/>
    </location>
</feature>
<feature type="binding site" evidence="12">
    <location>
        <position position="132"/>
    </location>
    <ligand>
        <name>2-oxoglutarate</name>
        <dbReference type="ChEBI" id="CHEBI:16810"/>
    </ligand>
</feature>
<feature type="binding site" evidence="3 12 21">
    <location>
        <position position="188"/>
    </location>
    <ligand>
        <name>Fe cation</name>
        <dbReference type="ChEBI" id="CHEBI:24875"/>
        <note>catalytic</note>
    </ligand>
</feature>
<feature type="binding site" evidence="12 21">
    <location>
        <position position="190"/>
    </location>
    <ligand>
        <name>Fe cation</name>
        <dbReference type="ChEBI" id="CHEBI:24875"/>
        <note>catalytic</note>
    </ligand>
</feature>
<feature type="binding site" evidence="12">
    <location>
        <position position="198"/>
    </location>
    <ligand>
        <name>2-oxoglutarate</name>
        <dbReference type="ChEBI" id="CHEBI:16810"/>
    </ligand>
</feature>
<feature type="binding site" evidence="12">
    <location>
        <position position="206"/>
    </location>
    <ligand>
        <name>2-oxoglutarate</name>
        <dbReference type="ChEBI" id="CHEBI:16810"/>
    </ligand>
</feature>
<feature type="binding site" evidence="22 23 24 25 26 27 28">
    <location>
        <position position="234"/>
    </location>
    <ligand>
        <name>Zn(2+)</name>
        <dbReference type="ChEBI" id="CHEBI:29105"/>
    </ligand>
</feature>
<feature type="binding site" evidence="22 23 24 25 26 27 28">
    <location>
        <position position="240"/>
    </location>
    <ligand>
        <name>Zn(2+)</name>
        <dbReference type="ChEBI" id="CHEBI:29105"/>
    </ligand>
</feature>
<feature type="binding site" evidence="1">
    <location>
        <position position="241"/>
    </location>
    <ligand>
        <name>2-oxoglutarate</name>
        <dbReference type="ChEBI" id="CHEBI:16810"/>
    </ligand>
</feature>
<feature type="binding site" evidence="3 12 21">
    <location>
        <position position="276"/>
    </location>
    <ligand>
        <name>Fe cation</name>
        <dbReference type="ChEBI" id="CHEBI:24875"/>
        <note>catalytic</note>
    </ligand>
</feature>
<feature type="binding site" evidence="22 23 24 25 26 27 28">
    <location>
        <position position="306"/>
    </location>
    <ligand>
        <name>Zn(2+)</name>
        <dbReference type="ChEBI" id="CHEBI:29105"/>
    </ligand>
</feature>
<feature type="binding site" evidence="22 23 24 25 26 27 28">
    <location>
        <position position="308"/>
    </location>
    <ligand>
        <name>Zn(2+)</name>
        <dbReference type="ChEBI" id="CHEBI:29105"/>
    </ligand>
</feature>
<feature type="site" description="Histone H3K4me3 binding">
    <location>
        <position position="945"/>
    </location>
</feature>
<feature type="site" description="Histone H3K4me3 binding">
    <location>
        <position position="967"/>
    </location>
</feature>
<feature type="site" description="Histone H3K4me3 binding">
    <location>
        <position position="973"/>
    </location>
</feature>
<feature type="modified residue" description="N-acetylalanine" evidence="29">
    <location>
        <position position="2"/>
    </location>
</feature>
<feature type="modified residue" description="Phosphoserine" evidence="30">
    <location>
        <position position="523"/>
    </location>
</feature>
<feature type="cross-link" description="(Microbial infection) Glycyl lysine isopeptide (Lys-Gly) (interchain with G-Cter in SUMO)" evidence="17">
    <location>
        <position position="471"/>
    </location>
</feature>
<feature type="splice variant" id="VSP_044239" description="In isoform 2." evidence="20">
    <location>
        <begin position="1"/>
        <end position="583"/>
    </location>
</feature>
<feature type="sequence variant" id="VAR_023775" description="In dbSNP:rs586339." evidence="6 19">
    <original>A</original>
    <variation>E</variation>
    <location>
        <position position="482"/>
    </location>
</feature>
<feature type="sequence variant" id="VAR_031217" description="In dbSNP:rs12759032.">
    <original>V</original>
    <variation>G</variation>
    <location>
        <position position="877"/>
    </location>
</feature>
<feature type="mutagenesis site" description="Abolishes histone demethylase activity; when associated with A-138." evidence="12">
    <original>G</original>
    <variation>A</variation>
    <location>
        <position position="133"/>
    </location>
</feature>
<feature type="mutagenesis site" description="Abolishes histone demethylase activity; when associated with A-138." evidence="12">
    <original>G</original>
    <variation>A</variation>
    <location>
        <position position="138"/>
    </location>
</feature>
<feature type="mutagenesis site" description="Abolishes histone demethylase activity; when associated with A-165." evidence="12">
    <original>G</original>
    <variation>A</variation>
    <location>
        <position position="165"/>
    </location>
</feature>
<feature type="mutagenesis site" description="Abolishes histone demethylase activity; when associated with A-165." evidence="12">
    <original>G</original>
    <variation>A</variation>
    <location>
        <position position="170"/>
    </location>
</feature>
<feature type="mutagenesis site" description="Abolishes histone demethylase activity without affecting ability to bind H4K20me2." evidence="11 15">
    <original>H</original>
    <variation>A</variation>
    <location>
        <position position="188"/>
    </location>
</feature>
<feature type="mutagenesis site" description="Displays histone demethylase activity for both dimethylated and H3-K9Me3.">
    <original>ST</original>
    <variation>AI</variation>
    <location>
        <begin position="288"/>
        <end position="289"/>
    </location>
</feature>
<feature type="mutagenesis site" description="Abolishes histone demethylase activity.">
    <original>ST</original>
    <variation>TV</variation>
    <variation>NV</variation>
    <variation>GG</variation>
    <location>
        <begin position="288"/>
        <end position="289"/>
    </location>
</feature>
<feature type="mutagenesis site" description="Complete loss of SUMO modification by human herpes virus 8 protein K-bZIP/K8." evidence="17">
    <original>K</original>
    <variation>R</variation>
    <location>
        <position position="471"/>
    </location>
</feature>
<feature type="mutagenesis site" description="Impairs binding to H4K20me2, promoting partial recruitment of TP53BP1." evidence="15">
    <original>D</original>
    <variation>R</variation>
    <location>
        <position position="939"/>
    </location>
</feature>
<feature type="mutagenesis site" description="Impairs binding to H3K4me3." evidence="10">
    <original>D</original>
    <variation>A</variation>
    <location>
        <position position="945"/>
    </location>
</feature>
<feature type="mutagenesis site" description="Abolishes binding to H3K4me3." evidence="10">
    <original>D</original>
    <variation>R</variation>
    <location>
        <position position="945"/>
    </location>
</feature>
<feature type="mutagenesis site" description="Abolishes binding to H3K4me3." evidence="10">
    <original>W</original>
    <variation>H</variation>
    <location>
        <position position="967"/>
    </location>
</feature>
<feature type="mutagenesis site" description="Abolishes binding to H3K4me3." evidence="10 12">
    <original>Y</original>
    <variation>A</variation>
    <location>
        <position position="973"/>
    </location>
</feature>
<feature type="helix" evidence="36">
    <location>
        <begin position="4"/>
        <end position="7"/>
    </location>
</feature>
<feature type="helix" evidence="37">
    <location>
        <begin position="10"/>
        <end position="12"/>
    </location>
</feature>
<feature type="strand" evidence="32">
    <location>
        <begin position="15"/>
        <end position="17"/>
    </location>
</feature>
<feature type="helix" evidence="36">
    <location>
        <begin position="21"/>
        <end position="24"/>
    </location>
</feature>
<feature type="helix" evidence="36">
    <location>
        <begin position="27"/>
        <end position="36"/>
    </location>
</feature>
<feature type="helix" evidence="36">
    <location>
        <begin position="39"/>
        <end position="42"/>
    </location>
</feature>
<feature type="strand" evidence="36">
    <location>
        <begin position="43"/>
        <end position="47"/>
    </location>
</feature>
<feature type="strand" evidence="35">
    <location>
        <begin position="55"/>
        <end position="57"/>
    </location>
</feature>
<feature type="turn" evidence="37">
    <location>
        <begin position="61"/>
        <end position="64"/>
    </location>
</feature>
<feature type="strand" evidence="36">
    <location>
        <begin position="66"/>
        <end position="69"/>
    </location>
</feature>
<feature type="strand" evidence="36">
    <location>
        <begin position="71"/>
        <end position="78"/>
    </location>
</feature>
<feature type="strand" evidence="36">
    <location>
        <begin position="81"/>
        <end position="88"/>
    </location>
</feature>
<feature type="helix" evidence="36">
    <location>
        <begin position="94"/>
        <end position="102"/>
    </location>
</feature>
<feature type="turn" evidence="36">
    <location>
        <begin position="104"/>
        <end position="106"/>
    </location>
</feature>
<feature type="helix" evidence="36">
    <location>
        <begin position="114"/>
        <end position="124"/>
    </location>
</feature>
<feature type="strand" evidence="38">
    <location>
        <begin position="125"/>
        <end position="128"/>
    </location>
</feature>
<feature type="strand" evidence="36">
    <location>
        <begin position="131"/>
        <end position="137"/>
    </location>
</feature>
<feature type="helix" evidence="33">
    <location>
        <begin position="150"/>
        <end position="152"/>
    </location>
</feature>
<feature type="helix" evidence="36">
    <location>
        <begin position="156"/>
        <end position="158"/>
    </location>
</feature>
<feature type="helix" evidence="36">
    <location>
        <begin position="159"/>
        <end position="164"/>
    </location>
</feature>
<feature type="turn" evidence="36">
    <location>
        <begin position="169"/>
        <end position="171"/>
    </location>
</feature>
<feature type="strand" evidence="36">
    <location>
        <begin position="175"/>
        <end position="179"/>
    </location>
</feature>
<feature type="strand" evidence="36">
    <location>
        <begin position="184"/>
        <end position="188"/>
    </location>
</feature>
<feature type="helix" evidence="36">
    <location>
        <begin position="191"/>
        <end position="193"/>
    </location>
</feature>
<feature type="strand" evidence="36">
    <location>
        <begin position="195"/>
        <end position="204"/>
    </location>
</feature>
<feature type="strand" evidence="36">
    <location>
        <begin position="206"/>
        <end position="211"/>
    </location>
</feature>
<feature type="helix" evidence="36">
    <location>
        <begin position="213"/>
        <end position="215"/>
    </location>
</feature>
<feature type="helix" evidence="36">
    <location>
        <begin position="216"/>
        <end position="226"/>
    </location>
</feature>
<feature type="helix" evidence="36">
    <location>
        <begin position="228"/>
        <end position="233"/>
    </location>
</feature>
<feature type="helix" evidence="36">
    <location>
        <begin position="237"/>
        <end position="240"/>
    </location>
</feature>
<feature type="strand" evidence="36">
    <location>
        <begin position="243"/>
        <end position="245"/>
    </location>
</feature>
<feature type="helix" evidence="36">
    <location>
        <begin position="247"/>
        <end position="252"/>
    </location>
</feature>
<feature type="strand" evidence="36">
    <location>
        <begin position="258"/>
        <end position="262"/>
    </location>
</feature>
<feature type="strand" evidence="36">
    <location>
        <begin position="267"/>
        <end position="270"/>
    </location>
</feature>
<feature type="strand" evidence="36">
    <location>
        <begin position="275"/>
        <end position="280"/>
    </location>
</feature>
<feature type="strand" evidence="36">
    <location>
        <begin position="282"/>
        <end position="291"/>
    </location>
</feature>
<feature type="helix" evidence="36">
    <location>
        <begin position="296"/>
        <end position="302"/>
    </location>
</feature>
<feature type="strand" evidence="36">
    <location>
        <begin position="307"/>
        <end position="310"/>
    </location>
</feature>
<feature type="helix" evidence="36">
    <location>
        <begin position="318"/>
        <end position="324"/>
    </location>
</feature>
<feature type="helix" evidence="36">
    <location>
        <begin position="326"/>
        <end position="328"/>
    </location>
</feature>
<feature type="helix" evidence="36">
    <location>
        <begin position="329"/>
        <end position="333"/>
    </location>
</feature>
<feature type="strand" evidence="34">
    <location>
        <begin position="343"/>
        <end position="345"/>
    </location>
</feature>
<feature type="helix" evidence="36">
    <location>
        <begin position="348"/>
        <end position="352"/>
    </location>
</feature>
<feature type="strand" evidence="31">
    <location>
        <begin position="904"/>
        <end position="908"/>
    </location>
</feature>
<feature type="strand" evidence="31">
    <location>
        <begin position="912"/>
        <end position="932"/>
    </location>
</feature>
<feature type="strand" evidence="31">
    <location>
        <begin position="937"/>
        <end position="941"/>
    </location>
</feature>
<feature type="helix" evidence="31">
    <location>
        <begin position="943"/>
        <end position="945"/>
    </location>
</feature>
<feature type="helix" evidence="31">
    <location>
        <begin position="951"/>
        <end position="954"/>
    </location>
</feature>
<feature type="strand" evidence="31">
    <location>
        <begin position="962"/>
        <end position="966"/>
    </location>
</feature>
<feature type="strand" evidence="31">
    <location>
        <begin position="972"/>
        <end position="990"/>
    </location>
</feature>
<feature type="strand" evidence="31">
    <location>
        <begin position="995"/>
        <end position="998"/>
    </location>
</feature>
<feature type="helix" evidence="31">
    <location>
        <begin position="1000"/>
        <end position="1002"/>
    </location>
</feature>
<feature type="strand" evidence="31">
    <location>
        <begin position="1003"/>
        <end position="1005"/>
    </location>
</feature>
<proteinExistence type="evidence at protein level"/>
<protein>
    <recommendedName>
        <fullName>Lysine-specific demethylase 4A</fullName>
        <ecNumber evidence="11">1.14.11.66</ecNumber>
        <ecNumber evidence="11">1.14.11.69</ecNumber>
    </recommendedName>
    <alternativeName>
        <fullName>JmjC domain-containing histone demethylation protein 3A</fullName>
    </alternativeName>
    <alternativeName>
        <fullName>Jumonji domain-containing protein 2A</fullName>
    </alternativeName>
    <alternativeName>
        <fullName evidence="20">[histone H3]-trimethyl-L-lysine(36) demethylase 4A</fullName>
    </alternativeName>
    <alternativeName>
        <fullName evidence="20">[histone H3]-trimethyl-L-lysine(9) demethylase 4A</fullName>
    </alternativeName>
</protein>
<name>KDM4A_HUMAN</name>
<evidence type="ECO:0000250" key="1">
    <source>
        <dbReference type="UniProtKB" id="B2RXH2"/>
    </source>
</evidence>
<evidence type="ECO:0000255" key="2">
    <source>
        <dbReference type="PROSITE-ProRule" id="PRU00537"/>
    </source>
</evidence>
<evidence type="ECO:0000255" key="3">
    <source>
        <dbReference type="PROSITE-ProRule" id="PRU00538"/>
    </source>
</evidence>
<evidence type="ECO:0000255" key="4">
    <source>
        <dbReference type="PROSITE-ProRule" id="PRU01146"/>
    </source>
</evidence>
<evidence type="ECO:0000256" key="5">
    <source>
        <dbReference type="SAM" id="MobiDB-lite"/>
    </source>
</evidence>
<evidence type="ECO:0000269" key="6">
    <source>
    </source>
</evidence>
<evidence type="ECO:0000269" key="7">
    <source>
    </source>
</evidence>
<evidence type="ECO:0000269" key="8">
    <source>
    </source>
</evidence>
<evidence type="ECO:0000269" key="9">
    <source>
    </source>
</evidence>
<evidence type="ECO:0000269" key="10">
    <source>
    </source>
</evidence>
<evidence type="ECO:0000269" key="11">
    <source>
    </source>
</evidence>
<evidence type="ECO:0000269" key="12">
    <source>
    </source>
</evidence>
<evidence type="ECO:0000269" key="13">
    <source>
    </source>
</evidence>
<evidence type="ECO:0000269" key="14">
    <source>
    </source>
</evidence>
<evidence type="ECO:0000269" key="15">
    <source>
    </source>
</evidence>
<evidence type="ECO:0000269" key="16">
    <source>
    </source>
</evidence>
<evidence type="ECO:0000269" key="17">
    <source>
    </source>
</evidence>
<evidence type="ECO:0000269" key="18">
    <source>
    </source>
</evidence>
<evidence type="ECO:0000269" key="19">
    <source>
    </source>
</evidence>
<evidence type="ECO:0000305" key="20"/>
<evidence type="ECO:0000305" key="21">
    <source>
    </source>
</evidence>
<evidence type="ECO:0007744" key="22">
    <source>
        <dbReference type="PDB" id="5F2W"/>
    </source>
</evidence>
<evidence type="ECO:0007744" key="23">
    <source>
        <dbReference type="PDB" id="5F32"/>
    </source>
</evidence>
<evidence type="ECO:0007744" key="24">
    <source>
        <dbReference type="PDB" id="5F37"/>
    </source>
</evidence>
<evidence type="ECO:0007744" key="25">
    <source>
        <dbReference type="PDB" id="5F39"/>
    </source>
</evidence>
<evidence type="ECO:0007744" key="26">
    <source>
        <dbReference type="PDB" id="5F3E"/>
    </source>
</evidence>
<evidence type="ECO:0007744" key="27">
    <source>
        <dbReference type="PDB" id="5F3G"/>
    </source>
</evidence>
<evidence type="ECO:0007744" key="28">
    <source>
        <dbReference type="PDB" id="5F5I"/>
    </source>
</evidence>
<evidence type="ECO:0007744" key="29">
    <source>
    </source>
</evidence>
<evidence type="ECO:0007744" key="30">
    <source>
    </source>
</evidence>
<evidence type="ECO:0007829" key="31">
    <source>
        <dbReference type="PDB" id="2QQR"/>
    </source>
</evidence>
<evidence type="ECO:0007829" key="32">
    <source>
        <dbReference type="PDB" id="4V2W"/>
    </source>
</evidence>
<evidence type="ECO:0007829" key="33">
    <source>
        <dbReference type="PDB" id="5F32"/>
    </source>
</evidence>
<evidence type="ECO:0007829" key="34">
    <source>
        <dbReference type="PDB" id="5F3I"/>
    </source>
</evidence>
<evidence type="ECO:0007829" key="35">
    <source>
        <dbReference type="PDB" id="6G5W"/>
    </source>
</evidence>
<evidence type="ECO:0007829" key="36">
    <source>
        <dbReference type="PDB" id="6G5X"/>
    </source>
</evidence>
<evidence type="ECO:0007829" key="37">
    <source>
        <dbReference type="PDB" id="6H8P"/>
    </source>
</evidence>
<evidence type="ECO:0007829" key="38">
    <source>
        <dbReference type="PDB" id="7EQV"/>
    </source>
</evidence>
<sequence length="1064" mass="120662">MASESETLNPSARIMTFYPTMEEFRNFSRYIAYIESQGAHRAGLAKVVPPKEWKPRASYDDIDDLVIPAPIQQLVTGQSGLFTQYNIQKKAMTVREFRKIANSDKYCTPRYSEFEELERKYWKNLTFNPPIYGADVNGTLYEKHVDEWNIGRLRTILDLVEKESGITIEGVNTPYLYFGMWKTSFAWHTEDMDLYSINYLHFGEPKSWYSVPPEHGKRLERLAKGFFPGSAQSCEAFLRHKMTLISPLMLKKYGIPFDKVTQEAGEFMITFPYGYHAGFNHGFNCAESTNFATRRWIEYGKQAVLCSCRKDMVKISMDVFVRKFQPERYKLWKAGKDNTVIDHTLPTPEAAEFLKESELPPRAGNEEECPEEDMEGVEDGEEGDLKTSLAKHRIGTKRHRVCLEIPQEVSQSELFPKEDLSSEQYEMTECPAALAPVRPTHSSVRQVEDGLTFPDYSDSTEVKFEELKNVKLEEEDEEEEQAAAALDLSVNPASVGGRLVFSGSKKKSSSSLGSGSSRDSISSDSETSEPLSCRAQGQTGVLTVHSYAKGDGRVTVGEPCTRKKGSAARSFSERELAEVADEYMFSLEENKKSKGRRQPLSKLPRHHPLVLQECVSDDETSEQLTPEEEAEETEAWAKPLSQLWQNRPPNFEAEKEFNETMAQQAPHCAVCMIFQTYHQVEFGGFNQNCGNASDLAPQKQRTKPLIPEMCFTSTGCSTDINLSTPYLEEDGTSILVSCKKCSVRVHASCYGVPPAKASEDWMCSRCSANALEEDCCLCSLRGGALQRANDDRWVHVSCAVAILEARFVNIAERSPVDVSKIPLPRFKLKCIFCKKRRKRTAGCCVQCSHGRCPTAFHVSCAQAAGVMMQPDDWPFVVFITCFRHKIPNLERAKGALQSITAGQKVISKHKNGRFYQCEVVRLTTETFYEVNFDDGSFSDNLYPEDIVSQDCLQFGPPAEGEVVQVRWTDGQVYGAKFVASHPIQMYQVEFEDGSQLVVKRDDVYTLDEELPKRVKSRLSVASDMRFNEIFTEKEVKQEKKRQRVINSRYREDYIEPALYRAIME</sequence>